<evidence type="ECO:0000255" key="1">
    <source>
        <dbReference type="HAMAP-Rule" id="MF_00672"/>
    </source>
</evidence>
<feature type="chain" id="PRO_1000044737" description="UPF0761 membrane protein XOO3417">
    <location>
        <begin position="1"/>
        <end position="425"/>
    </location>
</feature>
<feature type="transmembrane region" description="Helical" evidence="1">
    <location>
        <begin position="48"/>
        <end position="68"/>
    </location>
</feature>
<feature type="transmembrane region" description="Helical" evidence="1">
    <location>
        <begin position="105"/>
        <end position="125"/>
    </location>
</feature>
<feature type="transmembrane region" description="Helical" evidence="1">
    <location>
        <begin position="154"/>
        <end position="174"/>
    </location>
</feature>
<feature type="transmembrane region" description="Helical" evidence="1">
    <location>
        <begin position="182"/>
        <end position="202"/>
    </location>
</feature>
<feature type="transmembrane region" description="Helical" evidence="1">
    <location>
        <begin position="219"/>
        <end position="239"/>
    </location>
</feature>
<feature type="transmembrane region" description="Helical" evidence="1">
    <location>
        <begin position="250"/>
        <end position="270"/>
    </location>
</feature>
<sequence>MSRVKKLHQWKERLRDRARTVSFGRFLWRRFLDDRLFQAAASLAYTTVFALVPLAIVVFGVLSAFPAFNEWKDALTDFIFTNFVPGAARSVQNYLNRSLEDLGKFTVAGMVALVASLLITLHSIEQTFNSIWRVAAARPKVTRFLIYWTVLTLGTMLAAASMAMAAYVFALPLFRTTEGQWLAEFAWRLAPMAVEFICIVLIYRVVPQHVVRLRHALPGALLAVILMEIVKWGFGVYLGNFQTYQRIYGALSALPILLLWIYLSWVSVLLGASLASSMAAFRYQPEAMRLPTGFEIYGLLRLLGRFRQARIHGEGLDEDRILALEPMLTDTLMQELLCELKRMRLLRRDERGQWLLARDLDLVPLAELYENCQLRVPIEDRPLPCRDDAYGQAAAAALEQLRQPLRSVLAQPVGDLYTHLPGDPP</sequence>
<proteinExistence type="inferred from homology"/>
<dbReference type="EMBL" id="AP008229">
    <property type="protein sequence ID" value="BAE70172.1"/>
    <property type="molecule type" value="Genomic_DNA"/>
</dbReference>
<dbReference type="RefSeq" id="WP_011260056.1">
    <property type="nucleotide sequence ID" value="NC_007705.1"/>
</dbReference>
<dbReference type="SMR" id="Q2NZV5"/>
<dbReference type="KEGG" id="xom:XOO3417"/>
<dbReference type="HOGENOM" id="CLU_032288_1_0_6"/>
<dbReference type="GO" id="GO:0005886">
    <property type="term" value="C:plasma membrane"/>
    <property type="evidence" value="ECO:0007669"/>
    <property type="project" value="UniProtKB-SubCell"/>
</dbReference>
<dbReference type="HAMAP" id="MF_00672">
    <property type="entry name" value="UPF0761"/>
    <property type="match status" value="1"/>
</dbReference>
<dbReference type="InterPro" id="IPR023679">
    <property type="entry name" value="UPF0761_bac"/>
</dbReference>
<dbReference type="InterPro" id="IPR017039">
    <property type="entry name" value="Virul_fac_BrkB"/>
</dbReference>
<dbReference type="NCBIfam" id="NF003256">
    <property type="entry name" value="PRK04214.1"/>
    <property type="match status" value="1"/>
</dbReference>
<dbReference type="NCBIfam" id="TIGR00765">
    <property type="entry name" value="yihY_not_rbn"/>
    <property type="match status" value="1"/>
</dbReference>
<dbReference type="PANTHER" id="PTHR30213">
    <property type="entry name" value="INNER MEMBRANE PROTEIN YHJD"/>
    <property type="match status" value="1"/>
</dbReference>
<dbReference type="PANTHER" id="PTHR30213:SF0">
    <property type="entry name" value="UPF0761 MEMBRANE PROTEIN YIHY"/>
    <property type="match status" value="1"/>
</dbReference>
<dbReference type="Pfam" id="PF03631">
    <property type="entry name" value="Virul_fac_BrkB"/>
    <property type="match status" value="1"/>
</dbReference>
<keyword id="KW-0997">Cell inner membrane</keyword>
<keyword id="KW-1003">Cell membrane</keyword>
<keyword id="KW-0472">Membrane</keyword>
<keyword id="KW-0812">Transmembrane</keyword>
<keyword id="KW-1133">Transmembrane helix</keyword>
<reference key="1">
    <citation type="journal article" date="2005" name="Jpn. Agric. Res. Q.">
        <title>Genome sequence of Xanthomonas oryzae pv. oryzae suggests contribution of large numbers of effector genes and insertion sequences to its race diversity.</title>
        <authorList>
            <person name="Ochiai H."/>
            <person name="Inoue Y."/>
            <person name="Takeya M."/>
            <person name="Sasaki A."/>
            <person name="Kaku H."/>
        </authorList>
    </citation>
    <scope>NUCLEOTIDE SEQUENCE [LARGE SCALE GENOMIC DNA]</scope>
    <source>
        <strain>MAFF 311018</strain>
    </source>
</reference>
<protein>
    <recommendedName>
        <fullName evidence="1">UPF0761 membrane protein XOO3417</fullName>
    </recommendedName>
</protein>
<accession>Q2NZV5</accession>
<gene>
    <name type="ordered locus">XOO3417</name>
</gene>
<comment type="subcellular location">
    <subcellularLocation>
        <location evidence="1">Cell inner membrane</location>
        <topology evidence="1">Multi-pass membrane protein</topology>
    </subcellularLocation>
</comment>
<comment type="similarity">
    <text evidence="1">Belongs to the UPF0761 family.</text>
</comment>
<organism>
    <name type="scientific">Xanthomonas oryzae pv. oryzae (strain MAFF 311018)</name>
    <dbReference type="NCBI Taxonomy" id="342109"/>
    <lineage>
        <taxon>Bacteria</taxon>
        <taxon>Pseudomonadati</taxon>
        <taxon>Pseudomonadota</taxon>
        <taxon>Gammaproteobacteria</taxon>
        <taxon>Lysobacterales</taxon>
        <taxon>Lysobacteraceae</taxon>
        <taxon>Xanthomonas</taxon>
    </lineage>
</organism>
<name>Y3417_XANOM</name>